<accession>Q92J42</accession>
<gene>
    <name type="primary">sucA</name>
    <name type="ordered locus">RC0227</name>
</gene>
<organism>
    <name type="scientific">Rickettsia conorii (strain ATCC VR-613 / Malish 7)</name>
    <dbReference type="NCBI Taxonomy" id="272944"/>
    <lineage>
        <taxon>Bacteria</taxon>
        <taxon>Pseudomonadati</taxon>
        <taxon>Pseudomonadota</taxon>
        <taxon>Alphaproteobacteria</taxon>
        <taxon>Rickettsiales</taxon>
        <taxon>Rickettsiaceae</taxon>
        <taxon>Rickettsieae</taxon>
        <taxon>Rickettsia</taxon>
        <taxon>spotted fever group</taxon>
    </lineage>
</organism>
<name>ODO1_RICCN</name>
<dbReference type="EC" id="1.2.4.2" evidence="1"/>
<dbReference type="EMBL" id="AE006914">
    <property type="protein sequence ID" value="AAL02765.1"/>
    <property type="molecule type" value="Genomic_DNA"/>
</dbReference>
<dbReference type="PIR" id="C97728">
    <property type="entry name" value="C97728"/>
</dbReference>
<dbReference type="RefSeq" id="WP_010976891.1">
    <property type="nucleotide sequence ID" value="NC_003103.1"/>
</dbReference>
<dbReference type="SMR" id="Q92J42"/>
<dbReference type="GeneID" id="927961"/>
<dbReference type="KEGG" id="rco:RC0227"/>
<dbReference type="PATRIC" id="fig|272944.4.peg.262"/>
<dbReference type="HOGENOM" id="CLU_004709_1_0_5"/>
<dbReference type="Proteomes" id="UP000000816">
    <property type="component" value="Chromosome"/>
</dbReference>
<dbReference type="GO" id="GO:0005829">
    <property type="term" value="C:cytosol"/>
    <property type="evidence" value="ECO:0007669"/>
    <property type="project" value="TreeGrafter"/>
</dbReference>
<dbReference type="GO" id="GO:0045252">
    <property type="term" value="C:oxoglutarate dehydrogenase complex"/>
    <property type="evidence" value="ECO:0007669"/>
    <property type="project" value="TreeGrafter"/>
</dbReference>
<dbReference type="GO" id="GO:0004591">
    <property type="term" value="F:oxoglutarate dehydrogenase (succinyl-transferring) activity"/>
    <property type="evidence" value="ECO:0007669"/>
    <property type="project" value="UniProtKB-EC"/>
</dbReference>
<dbReference type="GO" id="GO:0030976">
    <property type="term" value="F:thiamine pyrophosphate binding"/>
    <property type="evidence" value="ECO:0007669"/>
    <property type="project" value="InterPro"/>
</dbReference>
<dbReference type="GO" id="GO:0006096">
    <property type="term" value="P:glycolytic process"/>
    <property type="evidence" value="ECO:0007669"/>
    <property type="project" value="UniProtKB-KW"/>
</dbReference>
<dbReference type="GO" id="GO:0006099">
    <property type="term" value="P:tricarboxylic acid cycle"/>
    <property type="evidence" value="ECO:0007669"/>
    <property type="project" value="TreeGrafter"/>
</dbReference>
<dbReference type="CDD" id="cd02016">
    <property type="entry name" value="TPP_E1_OGDC_like"/>
    <property type="match status" value="1"/>
</dbReference>
<dbReference type="FunFam" id="3.40.50.12470:FF:000009">
    <property type="entry name" value="2-oxoglutarate dehydrogenase E1 component"/>
    <property type="match status" value="1"/>
</dbReference>
<dbReference type="Gene3D" id="3.40.50.12470">
    <property type="match status" value="1"/>
</dbReference>
<dbReference type="Gene3D" id="3.40.50.970">
    <property type="match status" value="1"/>
</dbReference>
<dbReference type="Gene3D" id="3.40.50.11610">
    <property type="entry name" value="Multifunctional 2-oxoglutarate metabolism enzyme, C-terminal domain"/>
    <property type="match status" value="1"/>
</dbReference>
<dbReference type="Gene3D" id="1.10.287.1150">
    <property type="entry name" value="TPP helical domain"/>
    <property type="match status" value="1"/>
</dbReference>
<dbReference type="InterPro" id="IPR032106">
    <property type="entry name" value="2-oxogl_dehyd_N"/>
</dbReference>
<dbReference type="InterPro" id="IPR011603">
    <property type="entry name" value="2oxoglutarate_DH_E1"/>
</dbReference>
<dbReference type="InterPro" id="IPR001017">
    <property type="entry name" value="DH_E1"/>
</dbReference>
<dbReference type="InterPro" id="IPR042179">
    <property type="entry name" value="KGD_C_sf"/>
</dbReference>
<dbReference type="InterPro" id="IPR031717">
    <property type="entry name" value="ODO-1/KGD_C"/>
</dbReference>
<dbReference type="InterPro" id="IPR029061">
    <property type="entry name" value="THDP-binding"/>
</dbReference>
<dbReference type="InterPro" id="IPR005475">
    <property type="entry name" value="Transketolase-like_Pyr-bd"/>
</dbReference>
<dbReference type="NCBIfam" id="TIGR00239">
    <property type="entry name" value="2oxo_dh_E1"/>
    <property type="match status" value="1"/>
</dbReference>
<dbReference type="NCBIfam" id="NF006914">
    <property type="entry name" value="PRK09404.1"/>
    <property type="match status" value="1"/>
</dbReference>
<dbReference type="NCBIfam" id="NF008907">
    <property type="entry name" value="PRK12270.1"/>
    <property type="match status" value="1"/>
</dbReference>
<dbReference type="PANTHER" id="PTHR23152:SF4">
    <property type="entry name" value="2-OXOADIPATE DEHYDROGENASE COMPLEX COMPONENT E1"/>
    <property type="match status" value="1"/>
</dbReference>
<dbReference type="PANTHER" id="PTHR23152">
    <property type="entry name" value="2-OXOGLUTARATE DEHYDROGENASE"/>
    <property type="match status" value="1"/>
</dbReference>
<dbReference type="Pfam" id="PF16078">
    <property type="entry name" value="2-oxogl_dehyd_N"/>
    <property type="match status" value="1"/>
</dbReference>
<dbReference type="Pfam" id="PF00676">
    <property type="entry name" value="E1_dh"/>
    <property type="match status" value="1"/>
</dbReference>
<dbReference type="Pfam" id="PF16870">
    <property type="entry name" value="OxoGdeHyase_C"/>
    <property type="match status" value="1"/>
</dbReference>
<dbReference type="Pfam" id="PF02779">
    <property type="entry name" value="Transket_pyr"/>
    <property type="match status" value="1"/>
</dbReference>
<dbReference type="PIRSF" id="PIRSF000157">
    <property type="entry name" value="Oxoglu_dh_E1"/>
    <property type="match status" value="1"/>
</dbReference>
<dbReference type="SMART" id="SM00861">
    <property type="entry name" value="Transket_pyr"/>
    <property type="match status" value="1"/>
</dbReference>
<dbReference type="SUPFAM" id="SSF52518">
    <property type="entry name" value="Thiamin diphosphate-binding fold (THDP-binding)"/>
    <property type="match status" value="2"/>
</dbReference>
<keyword id="KW-0324">Glycolysis</keyword>
<keyword id="KW-0560">Oxidoreductase</keyword>
<keyword id="KW-0786">Thiamine pyrophosphate</keyword>
<sequence length="928" mass="103801">MGEDFKKTGYLFGGNAVFVEELYKQYLANPASVDQTWQEFFAGIKDNNTLLNKSTAKIIIPDEIKKESLNNNLSSEDLNSLKAKEMINAYRKHAHYLANLDPLGLELRKTKNDLKLNIETFGLDSGQLEENINITDEFVGTWNCKLSELVTKFDKVYTGSIGVEFEQIENVAGKNWLYNKLESEVTFSSEDKKTILNDLVEVEGFEQYLHTKFPGAKRFSIEGGDASIVAMSKAIDLSMHQGVSEIVIGMAHRGRLNTLTKVVGKPYKAVIADFISGSVFPDELNVSGDVKYHLGYSSDRTLEDKKIHLSLADNPSHLEAVNPIVAGKVRAKQDILGDTKRSKVKAILVHGDAAFCGQGVVAESLSMSPLAAYDIGGILHFVINNQLGFTANAADTRASRYSTEFAKIIAAPILHVNGDDIEAVLKATNIAVEYRQKFGKDVVVEIICYRKYGHNEGDEPMYTQGKMYNIIKNKLTPGNIYANELVKSGVIDNNYFAKLKEEFKAKLDKEYEQAKSYKQEAHFLGGLWQGISRTRTQATITGISKKTLHDLGTKLCEIPKDFAVNPKLVKLFEARKATLTADQPIDWATAEQLAFASLLASGTNIRLTGQDSGRGTFSHRHSVLHNQIDGTTYIPLNNLSKEQAKYEVADSNLSEYAVLGFEYGYSLANPKNLVLWEAQFGDFANGAQIIFDQFISSSETKWLRMSGLVVLLPHAFEGQGPEHSSARLERFLQLAAENNMYVTYPTTPASIFHLLRRQILDDTRKPLIVMSPKSLLRHKYAVSKLDELGENTTFLPVLDEVTKVDTNNITKVILCSGKVYYDLFEMRGNNSNIAIIRLEQLYPFEKKLVASLLKKYNRTQEFIWCQEEPKNMGTWCYIVSHLNDALKEAGIKNEFKYVGREESASPAVGSLQVHNKQQEKLLRTALGI</sequence>
<proteinExistence type="inferred from homology"/>
<protein>
    <recommendedName>
        <fullName>2-oxoglutarate dehydrogenase E1 component</fullName>
        <ecNumber evidence="1">1.2.4.2</ecNumber>
    </recommendedName>
    <alternativeName>
        <fullName>Alpha-ketoglutarate dehydrogenase</fullName>
    </alternativeName>
</protein>
<reference key="1">
    <citation type="journal article" date="2001" name="Science">
        <title>Mechanisms of evolution in Rickettsia conorii and R. prowazekii.</title>
        <authorList>
            <person name="Ogata H."/>
            <person name="Audic S."/>
            <person name="Renesto-Audiffren P."/>
            <person name="Fournier P.-E."/>
            <person name="Barbe V."/>
            <person name="Samson D."/>
            <person name="Roux V."/>
            <person name="Cossart P."/>
            <person name="Weissenbach J."/>
            <person name="Claverie J.-M."/>
            <person name="Raoult D."/>
        </authorList>
    </citation>
    <scope>NUCLEOTIDE SEQUENCE [LARGE SCALE GENOMIC DNA]</scope>
    <source>
        <strain>ATCC VR-613 / Malish 7</strain>
    </source>
</reference>
<evidence type="ECO:0000250" key="1">
    <source>
        <dbReference type="UniProtKB" id="P0AFG3"/>
    </source>
</evidence>
<evidence type="ECO:0000305" key="2"/>
<feature type="chain" id="PRO_0000162195" description="2-oxoglutarate dehydrogenase E1 component">
    <location>
        <begin position="1"/>
        <end position="928"/>
    </location>
</feature>
<comment type="function">
    <text evidence="1">E1 component of the 2-oxoglutarate dehydrogenase (OGDH) complex which catalyzes the decarboxylation of 2-oxoglutarate, the first step in the conversion of 2-oxoglutarate to succinyl-CoA and CO(2).</text>
</comment>
<comment type="catalytic activity">
    <reaction evidence="1">
        <text>N(6)-[(R)-lipoyl]-L-lysyl-[protein] + 2-oxoglutarate + H(+) = N(6)-[(R)-S(8)-succinyldihydrolipoyl]-L-lysyl-[protein] + CO2</text>
        <dbReference type="Rhea" id="RHEA:12188"/>
        <dbReference type="Rhea" id="RHEA-COMP:10474"/>
        <dbReference type="Rhea" id="RHEA-COMP:20092"/>
        <dbReference type="ChEBI" id="CHEBI:15378"/>
        <dbReference type="ChEBI" id="CHEBI:16526"/>
        <dbReference type="ChEBI" id="CHEBI:16810"/>
        <dbReference type="ChEBI" id="CHEBI:83099"/>
        <dbReference type="ChEBI" id="CHEBI:83120"/>
        <dbReference type="EC" id="1.2.4.2"/>
    </reaction>
</comment>
<comment type="cofactor">
    <cofactor evidence="1">
        <name>thiamine diphosphate</name>
        <dbReference type="ChEBI" id="CHEBI:58937"/>
    </cofactor>
</comment>
<comment type="subunit">
    <text evidence="1">Homodimer. Part of the 2-oxoglutarate dehydrogenase (OGDH) complex composed of E1 (2-oxoglutarate dehydrogenase), E2 (dihydrolipoamide succinyltransferase) and E3 (dihydrolipoamide dehydrogenase); the complex contains multiple copies of the three enzymatic components (E1, E2 and E3).</text>
</comment>
<comment type="similarity">
    <text evidence="2">Belongs to the alpha-ketoglutarate dehydrogenase family.</text>
</comment>